<gene>
    <name evidence="1" type="primary">thiM</name>
    <name type="ordered locus">GAU_3710</name>
</gene>
<proteinExistence type="inferred from homology"/>
<comment type="function">
    <text evidence="1">Catalyzes the phosphorylation of the hydroxyl group of 4-methyl-5-beta-hydroxyethylthiazole (THZ).</text>
</comment>
<comment type="catalytic activity">
    <reaction evidence="1">
        <text>5-(2-hydroxyethyl)-4-methylthiazole + ATP = 4-methyl-5-(2-phosphooxyethyl)-thiazole + ADP + H(+)</text>
        <dbReference type="Rhea" id="RHEA:24212"/>
        <dbReference type="ChEBI" id="CHEBI:15378"/>
        <dbReference type="ChEBI" id="CHEBI:17957"/>
        <dbReference type="ChEBI" id="CHEBI:30616"/>
        <dbReference type="ChEBI" id="CHEBI:58296"/>
        <dbReference type="ChEBI" id="CHEBI:456216"/>
        <dbReference type="EC" id="2.7.1.50"/>
    </reaction>
</comment>
<comment type="cofactor">
    <cofactor evidence="1">
        <name>Mg(2+)</name>
        <dbReference type="ChEBI" id="CHEBI:18420"/>
    </cofactor>
</comment>
<comment type="pathway">
    <text evidence="1">Cofactor biosynthesis; thiamine diphosphate biosynthesis; 4-methyl-5-(2-phosphoethyl)-thiazole from 5-(2-hydroxyethyl)-4-methylthiazole: step 1/1.</text>
</comment>
<comment type="similarity">
    <text evidence="1">Belongs to the Thz kinase family.</text>
</comment>
<sequence length="277" mass="27690">MDAPSSASGPTQPRLSPADALAALRASAPLTQCITNYVAMQIAANTLLAAGAAPAMIHTVEESGAFAGLARAVTINIGTLSPAWVDGMKAAIDGATAVGTPWVLDPVAHYASAYRSAVARDLLSRRPTILRGNASEILALAGGNTAARGVDAADPVTAAGAAASALAREYGSVVAVTGAVDLVTDGTRVAMVSGGSPWMPQVTALGCSLTCLMGAFAAVTAPLEATVAALTLFAEAGARAHAHSEGPGSFAWRFLDALAAVTPDDLTGTERVSWNAP</sequence>
<protein>
    <recommendedName>
        <fullName evidence="1">Hydroxyethylthiazole kinase</fullName>
        <ecNumber evidence="1">2.7.1.50</ecNumber>
    </recommendedName>
    <alternativeName>
        <fullName evidence="1">4-methyl-5-beta-hydroxyethylthiazole kinase</fullName>
        <shortName evidence="1">TH kinase</shortName>
        <shortName evidence="1">Thz kinase</shortName>
    </alternativeName>
</protein>
<dbReference type="EC" id="2.7.1.50" evidence="1"/>
<dbReference type="EMBL" id="AP009153">
    <property type="protein sequence ID" value="BAH40752.1"/>
    <property type="molecule type" value="Genomic_DNA"/>
</dbReference>
<dbReference type="RefSeq" id="WP_015895519.1">
    <property type="nucleotide sequence ID" value="NC_012489.1"/>
</dbReference>
<dbReference type="SMR" id="C1AE25"/>
<dbReference type="STRING" id="379066.GAU_3710"/>
<dbReference type="KEGG" id="gau:GAU_3710"/>
<dbReference type="eggNOG" id="COG2145">
    <property type="taxonomic scope" value="Bacteria"/>
</dbReference>
<dbReference type="HOGENOM" id="CLU_019943_0_1_0"/>
<dbReference type="OrthoDB" id="8909021at2"/>
<dbReference type="UniPathway" id="UPA00060">
    <property type="reaction ID" value="UER00139"/>
</dbReference>
<dbReference type="Proteomes" id="UP000002209">
    <property type="component" value="Chromosome"/>
</dbReference>
<dbReference type="GO" id="GO:0005524">
    <property type="term" value="F:ATP binding"/>
    <property type="evidence" value="ECO:0007669"/>
    <property type="project" value="UniProtKB-UniRule"/>
</dbReference>
<dbReference type="GO" id="GO:0004417">
    <property type="term" value="F:hydroxyethylthiazole kinase activity"/>
    <property type="evidence" value="ECO:0007669"/>
    <property type="project" value="UniProtKB-UniRule"/>
</dbReference>
<dbReference type="GO" id="GO:0000287">
    <property type="term" value="F:magnesium ion binding"/>
    <property type="evidence" value="ECO:0007669"/>
    <property type="project" value="UniProtKB-UniRule"/>
</dbReference>
<dbReference type="GO" id="GO:0009228">
    <property type="term" value="P:thiamine biosynthetic process"/>
    <property type="evidence" value="ECO:0007669"/>
    <property type="project" value="UniProtKB-KW"/>
</dbReference>
<dbReference type="GO" id="GO:0009229">
    <property type="term" value="P:thiamine diphosphate biosynthetic process"/>
    <property type="evidence" value="ECO:0007669"/>
    <property type="project" value="UniProtKB-UniRule"/>
</dbReference>
<dbReference type="CDD" id="cd01170">
    <property type="entry name" value="THZ_kinase"/>
    <property type="match status" value="1"/>
</dbReference>
<dbReference type="Gene3D" id="3.40.1190.20">
    <property type="match status" value="1"/>
</dbReference>
<dbReference type="HAMAP" id="MF_00228">
    <property type="entry name" value="Thz_kinase"/>
    <property type="match status" value="1"/>
</dbReference>
<dbReference type="InterPro" id="IPR000417">
    <property type="entry name" value="Hyethyz_kinase"/>
</dbReference>
<dbReference type="InterPro" id="IPR029056">
    <property type="entry name" value="Ribokinase-like"/>
</dbReference>
<dbReference type="NCBIfam" id="NF006830">
    <property type="entry name" value="PRK09355.1"/>
    <property type="match status" value="1"/>
</dbReference>
<dbReference type="Pfam" id="PF02110">
    <property type="entry name" value="HK"/>
    <property type="match status" value="1"/>
</dbReference>
<dbReference type="PIRSF" id="PIRSF000513">
    <property type="entry name" value="Thz_kinase"/>
    <property type="match status" value="1"/>
</dbReference>
<dbReference type="PRINTS" id="PR01099">
    <property type="entry name" value="HYETHTZKNASE"/>
</dbReference>
<dbReference type="SUPFAM" id="SSF53613">
    <property type="entry name" value="Ribokinase-like"/>
    <property type="match status" value="1"/>
</dbReference>
<feature type="chain" id="PRO_0000383863" description="Hydroxyethylthiazole kinase">
    <location>
        <begin position="1"/>
        <end position="277"/>
    </location>
</feature>
<feature type="binding site" evidence="1">
    <location>
        <position position="56"/>
    </location>
    <ligand>
        <name>substrate</name>
    </ligand>
</feature>
<feature type="binding site" evidence="1">
    <location>
        <position position="131"/>
    </location>
    <ligand>
        <name>ATP</name>
        <dbReference type="ChEBI" id="CHEBI:30616"/>
    </ligand>
</feature>
<feature type="binding site" evidence="1">
    <location>
        <position position="177"/>
    </location>
    <ligand>
        <name>ATP</name>
        <dbReference type="ChEBI" id="CHEBI:30616"/>
    </ligand>
</feature>
<feature type="binding site" evidence="1">
    <location>
        <position position="204"/>
    </location>
    <ligand>
        <name>substrate</name>
    </ligand>
</feature>
<evidence type="ECO:0000255" key="1">
    <source>
        <dbReference type="HAMAP-Rule" id="MF_00228"/>
    </source>
</evidence>
<accession>C1AE25</accession>
<reference key="1">
    <citation type="submission" date="2006-03" db="EMBL/GenBank/DDBJ databases">
        <title>Complete genome sequence of Gemmatimonas aurantiaca T-27 that represents a novel phylum Gemmatimonadetes.</title>
        <authorList>
            <person name="Takasaki K."/>
            <person name="Ichikawa N."/>
            <person name="Miura H."/>
            <person name="Matsushita S."/>
            <person name="Watanabe Y."/>
            <person name="Oguchi A."/>
            <person name="Ankai A."/>
            <person name="Yashiro I."/>
            <person name="Takahashi M."/>
            <person name="Terui Y."/>
            <person name="Fukui S."/>
            <person name="Yokoyama H."/>
            <person name="Tanikawa S."/>
            <person name="Hanada S."/>
            <person name="Kamagata Y."/>
            <person name="Fujita N."/>
        </authorList>
    </citation>
    <scope>NUCLEOTIDE SEQUENCE [LARGE SCALE GENOMIC DNA]</scope>
    <source>
        <strain>DSM 14586 / JCM 11422 / NBRC 100505 / T-27</strain>
    </source>
</reference>
<organism>
    <name type="scientific">Gemmatimonas aurantiaca (strain DSM 14586 / JCM 11422 / NBRC 100505 / T-27)</name>
    <dbReference type="NCBI Taxonomy" id="379066"/>
    <lineage>
        <taxon>Bacteria</taxon>
        <taxon>Pseudomonadati</taxon>
        <taxon>Gemmatimonadota</taxon>
        <taxon>Gemmatimonadia</taxon>
        <taxon>Gemmatimonadales</taxon>
        <taxon>Gemmatimonadaceae</taxon>
        <taxon>Gemmatimonas</taxon>
    </lineage>
</organism>
<name>THIM_GEMAT</name>
<keyword id="KW-0067">ATP-binding</keyword>
<keyword id="KW-0418">Kinase</keyword>
<keyword id="KW-0460">Magnesium</keyword>
<keyword id="KW-0479">Metal-binding</keyword>
<keyword id="KW-0547">Nucleotide-binding</keyword>
<keyword id="KW-1185">Reference proteome</keyword>
<keyword id="KW-0784">Thiamine biosynthesis</keyword>
<keyword id="KW-0808">Transferase</keyword>